<keyword id="KW-0963">Cytoplasm</keyword>
<keyword id="KW-0269">Exonuclease</keyword>
<keyword id="KW-0378">Hydrolase</keyword>
<keyword id="KW-0540">Nuclease</keyword>
<gene>
    <name evidence="1" type="primary">xseA</name>
    <name type="ordered locus">NT01EI_3155</name>
</gene>
<protein>
    <recommendedName>
        <fullName evidence="1">Exodeoxyribonuclease 7 large subunit</fullName>
        <ecNumber evidence="1">3.1.11.6</ecNumber>
    </recommendedName>
    <alternativeName>
        <fullName evidence="1">Exodeoxyribonuclease VII large subunit</fullName>
        <shortName evidence="1">Exonuclease VII large subunit</shortName>
    </alternativeName>
</protein>
<proteinExistence type="inferred from homology"/>
<accession>C5BER7</accession>
<organism>
    <name type="scientific">Edwardsiella ictaluri (strain 93-146)</name>
    <dbReference type="NCBI Taxonomy" id="634503"/>
    <lineage>
        <taxon>Bacteria</taxon>
        <taxon>Pseudomonadati</taxon>
        <taxon>Pseudomonadota</taxon>
        <taxon>Gammaproteobacteria</taxon>
        <taxon>Enterobacterales</taxon>
        <taxon>Hafniaceae</taxon>
        <taxon>Edwardsiella</taxon>
    </lineage>
</organism>
<sequence length="460" mass="51900">MTQPVTPTIFTVSRLNQTVRQLLELEMGQIWLSAEISNLSQPASGHWYFTLKDDKAQVRCAMFRNSNRRVTFRPQNGQQVLVRASITLYESRGDYQLIAESMQPAGDGLLQQQFEALKQRLQAEGLFDVGHKQPLPSPARCVGVITSTSGAALHDVLHVLRRRDPALPVVIYPSAVQGGEAPGQLVRAIALANLRAECDVLIVGRGGGSLEDLWSFNDERVARAIFASHIPIVSAVGHETDVSIADFVADLRAPTPSAAAEVVSRNRDELLRRLLSQRQRLDMALDYTLARRRQRLQQLRHRLEQQHPQLRLARQQARLLSLHRRLEEAIDTQLRLAERRWRLGGERLQQRSPAHALRQQQYHLQQLSHRLESQLQRSVAARRERFGALCSRLEGMSPLATLARGFSVTQRDDGQLLRHREQVAPGDTLRTRLEDGWVESQVTATRPLTARRPRGTKGSA</sequence>
<reference key="1">
    <citation type="submission" date="2009-03" db="EMBL/GenBank/DDBJ databases">
        <title>Complete genome sequence of Edwardsiella ictaluri 93-146.</title>
        <authorList>
            <person name="Williams M.L."/>
            <person name="Gillaspy A.F."/>
            <person name="Dyer D.W."/>
            <person name="Thune R.L."/>
            <person name="Waldbieser G.C."/>
            <person name="Schuster S.C."/>
            <person name="Gipson J."/>
            <person name="Zaitshik J."/>
            <person name="Landry C."/>
            <person name="Lawrence M.L."/>
        </authorList>
    </citation>
    <scope>NUCLEOTIDE SEQUENCE [LARGE SCALE GENOMIC DNA]</scope>
    <source>
        <strain>93-146</strain>
    </source>
</reference>
<name>EX7L_EDWI9</name>
<feature type="chain" id="PRO_1000205672" description="Exodeoxyribonuclease 7 large subunit">
    <location>
        <begin position="1"/>
        <end position="460"/>
    </location>
</feature>
<evidence type="ECO:0000255" key="1">
    <source>
        <dbReference type="HAMAP-Rule" id="MF_00378"/>
    </source>
</evidence>
<comment type="function">
    <text evidence="1">Bidirectionally degrades single-stranded DNA into large acid-insoluble oligonucleotides, which are then degraded further into small acid-soluble oligonucleotides.</text>
</comment>
<comment type="catalytic activity">
    <reaction evidence="1">
        <text>Exonucleolytic cleavage in either 5'- to 3'- or 3'- to 5'-direction to yield nucleoside 5'-phosphates.</text>
        <dbReference type="EC" id="3.1.11.6"/>
    </reaction>
</comment>
<comment type="subunit">
    <text evidence="1">Heterooligomer composed of large and small subunits.</text>
</comment>
<comment type="subcellular location">
    <subcellularLocation>
        <location evidence="1">Cytoplasm</location>
    </subcellularLocation>
</comment>
<comment type="similarity">
    <text evidence="1">Belongs to the XseA family.</text>
</comment>
<dbReference type="EC" id="3.1.11.6" evidence="1"/>
<dbReference type="EMBL" id="CP001600">
    <property type="protein sequence ID" value="ACR70305.1"/>
    <property type="molecule type" value="Genomic_DNA"/>
</dbReference>
<dbReference type="RefSeq" id="WP_015872393.1">
    <property type="nucleotide sequence ID" value="NZ_CP169062.1"/>
</dbReference>
<dbReference type="SMR" id="C5BER7"/>
<dbReference type="STRING" id="67780.B6E78_07440"/>
<dbReference type="GeneID" id="69540024"/>
<dbReference type="KEGG" id="eic:NT01EI_3155"/>
<dbReference type="PATRIC" id="fig|634503.3.peg.2816"/>
<dbReference type="HOGENOM" id="CLU_023625_3_1_6"/>
<dbReference type="OrthoDB" id="9802795at2"/>
<dbReference type="Proteomes" id="UP000001485">
    <property type="component" value="Chromosome"/>
</dbReference>
<dbReference type="GO" id="GO:0005737">
    <property type="term" value="C:cytoplasm"/>
    <property type="evidence" value="ECO:0007669"/>
    <property type="project" value="UniProtKB-SubCell"/>
</dbReference>
<dbReference type="GO" id="GO:0009318">
    <property type="term" value="C:exodeoxyribonuclease VII complex"/>
    <property type="evidence" value="ECO:0007669"/>
    <property type="project" value="InterPro"/>
</dbReference>
<dbReference type="GO" id="GO:0008855">
    <property type="term" value="F:exodeoxyribonuclease VII activity"/>
    <property type="evidence" value="ECO:0007669"/>
    <property type="project" value="UniProtKB-UniRule"/>
</dbReference>
<dbReference type="GO" id="GO:0003676">
    <property type="term" value="F:nucleic acid binding"/>
    <property type="evidence" value="ECO:0007669"/>
    <property type="project" value="InterPro"/>
</dbReference>
<dbReference type="GO" id="GO:0006308">
    <property type="term" value="P:DNA catabolic process"/>
    <property type="evidence" value="ECO:0007669"/>
    <property type="project" value="UniProtKB-UniRule"/>
</dbReference>
<dbReference type="CDD" id="cd04489">
    <property type="entry name" value="ExoVII_LU_OBF"/>
    <property type="match status" value="1"/>
</dbReference>
<dbReference type="HAMAP" id="MF_00378">
    <property type="entry name" value="Exonuc_7_L"/>
    <property type="match status" value="1"/>
</dbReference>
<dbReference type="InterPro" id="IPR003753">
    <property type="entry name" value="Exonuc_VII_L"/>
</dbReference>
<dbReference type="InterPro" id="IPR020579">
    <property type="entry name" value="Exonuc_VII_lsu_C"/>
</dbReference>
<dbReference type="InterPro" id="IPR025824">
    <property type="entry name" value="OB-fold_nuc-bd_dom"/>
</dbReference>
<dbReference type="NCBIfam" id="TIGR00237">
    <property type="entry name" value="xseA"/>
    <property type="match status" value="1"/>
</dbReference>
<dbReference type="PANTHER" id="PTHR30008">
    <property type="entry name" value="EXODEOXYRIBONUCLEASE 7 LARGE SUBUNIT"/>
    <property type="match status" value="1"/>
</dbReference>
<dbReference type="PANTHER" id="PTHR30008:SF0">
    <property type="entry name" value="EXODEOXYRIBONUCLEASE 7 LARGE SUBUNIT"/>
    <property type="match status" value="1"/>
</dbReference>
<dbReference type="Pfam" id="PF02601">
    <property type="entry name" value="Exonuc_VII_L"/>
    <property type="match status" value="1"/>
</dbReference>
<dbReference type="Pfam" id="PF13742">
    <property type="entry name" value="tRNA_anti_2"/>
    <property type="match status" value="1"/>
</dbReference>